<accession>Q9UYX2</accession>
<accession>G8ZHJ1</accession>
<keyword id="KW-0030">Aminoacyl-tRNA synthetase</keyword>
<keyword id="KW-0067">ATP-binding</keyword>
<keyword id="KW-0963">Cytoplasm</keyword>
<keyword id="KW-0436">Ligase</keyword>
<keyword id="KW-0460">Magnesium</keyword>
<keyword id="KW-0479">Metal-binding</keyword>
<keyword id="KW-0547">Nucleotide-binding</keyword>
<keyword id="KW-0648">Protein biosynthesis</keyword>
<reference key="1">
    <citation type="journal article" date="2003" name="Mol. Microbiol.">
        <title>An integrated analysis of the genome of the hyperthermophilic archaeon Pyrococcus abyssi.</title>
        <authorList>
            <person name="Cohen G.N."/>
            <person name="Barbe V."/>
            <person name="Flament D."/>
            <person name="Galperin M."/>
            <person name="Heilig R."/>
            <person name="Lecompte O."/>
            <person name="Poch O."/>
            <person name="Prieur D."/>
            <person name="Querellou J."/>
            <person name="Ripp R."/>
            <person name="Thierry J.-C."/>
            <person name="Van der Oost J."/>
            <person name="Weissenbach J."/>
            <person name="Zivanovic Y."/>
            <person name="Forterre P."/>
        </authorList>
    </citation>
    <scope>NUCLEOTIDE SEQUENCE [LARGE SCALE GENOMIC DNA]</scope>
    <source>
        <strain>GE5 / Orsay</strain>
    </source>
</reference>
<reference key="2">
    <citation type="journal article" date="2012" name="Curr. Microbiol.">
        <title>Re-annotation of two hyperthermophilic archaea Pyrococcus abyssi GE5 and Pyrococcus furiosus DSM 3638.</title>
        <authorList>
            <person name="Gao J."/>
            <person name="Wang J."/>
        </authorList>
    </citation>
    <scope>GENOME REANNOTATION</scope>
    <source>
        <strain>GE5 / Orsay</strain>
    </source>
</reference>
<organism>
    <name type="scientific">Pyrococcus abyssi (strain GE5 / Orsay)</name>
    <dbReference type="NCBI Taxonomy" id="272844"/>
    <lineage>
        <taxon>Archaea</taxon>
        <taxon>Methanobacteriati</taxon>
        <taxon>Methanobacteriota</taxon>
        <taxon>Thermococci</taxon>
        <taxon>Thermococcales</taxon>
        <taxon>Thermococcaceae</taxon>
        <taxon>Pyrococcus</taxon>
    </lineage>
</organism>
<dbReference type="EC" id="6.1.1.20" evidence="1"/>
<dbReference type="EMBL" id="AJ248287">
    <property type="protein sequence ID" value="CAB50290.1"/>
    <property type="molecule type" value="Genomic_DNA"/>
</dbReference>
<dbReference type="EMBL" id="HE613800">
    <property type="protein sequence ID" value="CCE70828.1"/>
    <property type="molecule type" value="Genomic_DNA"/>
</dbReference>
<dbReference type="PIR" id="E75049">
    <property type="entry name" value="E75049"/>
</dbReference>
<dbReference type="RefSeq" id="WP_010868500.1">
    <property type="nucleotide sequence ID" value="NC_000868.1"/>
</dbReference>
<dbReference type="SMR" id="Q9UYX2"/>
<dbReference type="STRING" id="272844.PAB2427"/>
<dbReference type="KEGG" id="pab:PAB2427"/>
<dbReference type="PATRIC" id="fig|272844.11.peg.1472"/>
<dbReference type="eggNOG" id="arCOG00412">
    <property type="taxonomic scope" value="Archaea"/>
</dbReference>
<dbReference type="HOGENOM" id="CLU_020279_3_0_2"/>
<dbReference type="OrthoDB" id="10073at2157"/>
<dbReference type="PhylomeDB" id="Q9UYX2"/>
<dbReference type="Proteomes" id="UP000000810">
    <property type="component" value="Chromosome"/>
</dbReference>
<dbReference type="Proteomes" id="UP000009139">
    <property type="component" value="Chromosome"/>
</dbReference>
<dbReference type="GO" id="GO:0009328">
    <property type="term" value="C:phenylalanine-tRNA ligase complex"/>
    <property type="evidence" value="ECO:0007669"/>
    <property type="project" value="TreeGrafter"/>
</dbReference>
<dbReference type="GO" id="GO:0005524">
    <property type="term" value="F:ATP binding"/>
    <property type="evidence" value="ECO:0007669"/>
    <property type="project" value="UniProtKB-UniRule"/>
</dbReference>
<dbReference type="GO" id="GO:0000287">
    <property type="term" value="F:magnesium ion binding"/>
    <property type="evidence" value="ECO:0007669"/>
    <property type="project" value="InterPro"/>
</dbReference>
<dbReference type="GO" id="GO:0004826">
    <property type="term" value="F:phenylalanine-tRNA ligase activity"/>
    <property type="evidence" value="ECO:0007669"/>
    <property type="project" value="UniProtKB-UniRule"/>
</dbReference>
<dbReference type="GO" id="GO:0003723">
    <property type="term" value="F:RNA binding"/>
    <property type="evidence" value="ECO:0007669"/>
    <property type="project" value="InterPro"/>
</dbReference>
<dbReference type="GO" id="GO:0006432">
    <property type="term" value="P:phenylalanyl-tRNA aminoacylation"/>
    <property type="evidence" value="ECO:0007669"/>
    <property type="project" value="UniProtKB-UniRule"/>
</dbReference>
<dbReference type="CDD" id="cd00769">
    <property type="entry name" value="PheRS_beta_core"/>
    <property type="match status" value="1"/>
</dbReference>
<dbReference type="FunFam" id="3.30.56.10:FF:000011">
    <property type="entry name" value="Phenylalanine--tRNA ligase beta subunit"/>
    <property type="match status" value="1"/>
</dbReference>
<dbReference type="FunFam" id="3.30.930.10:FF:000132">
    <property type="entry name" value="Phenylalanine--tRNA ligase beta subunit"/>
    <property type="match status" value="1"/>
</dbReference>
<dbReference type="FunFam" id="3.50.40.10:FF:000003">
    <property type="entry name" value="Phenylalanine--tRNA ligase beta subunit"/>
    <property type="match status" value="1"/>
</dbReference>
<dbReference type="Gene3D" id="3.30.56.10">
    <property type="match status" value="2"/>
</dbReference>
<dbReference type="Gene3D" id="3.30.930.10">
    <property type="entry name" value="Bira Bifunctional Protein, Domain 2"/>
    <property type="match status" value="1"/>
</dbReference>
<dbReference type="Gene3D" id="3.50.40.10">
    <property type="entry name" value="Phenylalanyl-trna Synthetase, Chain B, domain 3"/>
    <property type="match status" value="1"/>
</dbReference>
<dbReference type="HAMAP" id="MF_00284">
    <property type="entry name" value="Phe_tRNA_synth_beta2"/>
    <property type="match status" value="1"/>
</dbReference>
<dbReference type="InterPro" id="IPR045864">
    <property type="entry name" value="aa-tRNA-synth_II/BPL/LPL"/>
</dbReference>
<dbReference type="InterPro" id="IPR005146">
    <property type="entry name" value="B3/B4_tRNA-bd"/>
</dbReference>
<dbReference type="InterPro" id="IPR009061">
    <property type="entry name" value="DNA-bd_dom_put_sf"/>
</dbReference>
<dbReference type="InterPro" id="IPR045060">
    <property type="entry name" value="Phe-tRNA-ligase_IIc_bsu"/>
</dbReference>
<dbReference type="InterPro" id="IPR004531">
    <property type="entry name" value="Phe-tRNA-synth_IIc_bsu_arc_euk"/>
</dbReference>
<dbReference type="InterPro" id="IPR020825">
    <property type="entry name" value="Phe-tRNA_synthase-like_B3/B4"/>
</dbReference>
<dbReference type="InterPro" id="IPR022918">
    <property type="entry name" value="Phe_tRNA_ligase_beta2_arc"/>
</dbReference>
<dbReference type="InterPro" id="IPR041616">
    <property type="entry name" value="PheRS_beta_core"/>
</dbReference>
<dbReference type="InterPro" id="IPR005147">
    <property type="entry name" value="tRNA_synthase_B5-dom"/>
</dbReference>
<dbReference type="NCBIfam" id="TIGR00471">
    <property type="entry name" value="pheT_arch"/>
    <property type="match status" value="1"/>
</dbReference>
<dbReference type="PANTHER" id="PTHR10947:SF0">
    <property type="entry name" value="PHENYLALANINE--TRNA LIGASE BETA SUBUNIT"/>
    <property type="match status" value="1"/>
</dbReference>
<dbReference type="PANTHER" id="PTHR10947">
    <property type="entry name" value="PHENYLALANYL-TRNA SYNTHETASE BETA CHAIN AND LEUCINE-RICH REPEAT-CONTAINING PROTEIN 47"/>
    <property type="match status" value="1"/>
</dbReference>
<dbReference type="Pfam" id="PF03483">
    <property type="entry name" value="B3_4"/>
    <property type="match status" value="1"/>
</dbReference>
<dbReference type="Pfam" id="PF03484">
    <property type="entry name" value="B5"/>
    <property type="match status" value="1"/>
</dbReference>
<dbReference type="Pfam" id="PF17759">
    <property type="entry name" value="tRNA_synthFbeta"/>
    <property type="match status" value="1"/>
</dbReference>
<dbReference type="SMART" id="SM00873">
    <property type="entry name" value="B3_4"/>
    <property type="match status" value="1"/>
</dbReference>
<dbReference type="SMART" id="SM00874">
    <property type="entry name" value="B5"/>
    <property type="match status" value="1"/>
</dbReference>
<dbReference type="SUPFAM" id="SSF55681">
    <property type="entry name" value="Class II aaRS and biotin synthetases"/>
    <property type="match status" value="1"/>
</dbReference>
<dbReference type="SUPFAM" id="SSF56037">
    <property type="entry name" value="PheT/TilS domain"/>
    <property type="match status" value="1"/>
</dbReference>
<dbReference type="SUPFAM" id="SSF46955">
    <property type="entry name" value="Putative DNA-binding domain"/>
    <property type="match status" value="2"/>
</dbReference>
<dbReference type="PROSITE" id="PS51483">
    <property type="entry name" value="B5"/>
    <property type="match status" value="1"/>
</dbReference>
<comment type="catalytic activity">
    <reaction evidence="1">
        <text>tRNA(Phe) + L-phenylalanine + ATP = L-phenylalanyl-tRNA(Phe) + AMP + diphosphate + H(+)</text>
        <dbReference type="Rhea" id="RHEA:19413"/>
        <dbReference type="Rhea" id="RHEA-COMP:9668"/>
        <dbReference type="Rhea" id="RHEA-COMP:9699"/>
        <dbReference type="ChEBI" id="CHEBI:15378"/>
        <dbReference type="ChEBI" id="CHEBI:30616"/>
        <dbReference type="ChEBI" id="CHEBI:33019"/>
        <dbReference type="ChEBI" id="CHEBI:58095"/>
        <dbReference type="ChEBI" id="CHEBI:78442"/>
        <dbReference type="ChEBI" id="CHEBI:78531"/>
        <dbReference type="ChEBI" id="CHEBI:456215"/>
        <dbReference type="EC" id="6.1.1.20"/>
    </reaction>
</comment>
<comment type="cofactor">
    <cofactor evidence="1">
        <name>Mg(2+)</name>
        <dbReference type="ChEBI" id="CHEBI:18420"/>
    </cofactor>
</comment>
<comment type="subunit">
    <text evidence="1">Tetramer of two alpha and two beta subunits.</text>
</comment>
<comment type="subcellular location">
    <subcellularLocation>
        <location evidence="1">Cytoplasm</location>
    </subcellularLocation>
</comment>
<comment type="similarity">
    <text evidence="1 2">Belongs to the phenylalanyl-tRNA synthetase beta subunit family. Type 2 subfamily.</text>
</comment>
<gene>
    <name evidence="1" type="primary">pheT</name>
    <name type="ordered locus">PYRAB13850</name>
    <name type="ORF">PAB2427</name>
</gene>
<protein>
    <recommendedName>
        <fullName evidence="1">Phenylalanine--tRNA ligase beta subunit</fullName>
        <ecNumber evidence="1">6.1.1.20</ecNumber>
    </recommendedName>
    <alternativeName>
        <fullName evidence="1">Phenylalanyl-tRNA synthetase beta subunit</fullName>
        <shortName evidence="1">PheRS</shortName>
    </alternativeName>
</protein>
<sequence>MPKFDVSKSDLERLVGRSFSLEEWEDLVLYAKCELDDVWEENGKVYFKLDSKDTNRPDLWSAEGVARQIRWALGLQSGLPEYEVKESDVVVYVDEKLKNVRPYGVYAIVEGLNLDEDSLSQMIQLQEKVALTFGRRRREVAIGIFDFEKVKPPIYYRAAEKTEKFVPLGFEEELTLEEILEKHEKGIEYGHLIKDKPHYPLLVDSEGNVLSMPPIINSELTGRVTTETKKVFIDVTGWDLKKVMLALNVMVTALAERGGKIRSVKVIYKDFEIVTPDLTPKRFEVELNYIRKLSGLDLKDEEIKELLERMMYSVELEDGKAKLLYPAFRDDIMHARDVLEDVLIAYGYNNIEPEEPKLAVQGRGDPFKDFEDAIRDLMVGFGLQEIMTFNLTNKEVQFKKMNIPEEEIVEIANPVSQRWSALRKWLLPSLMEFLSNNTHEEYPQRIFEVGLATLIDESRETKTISEPKLAVALAGSEYTFTNAKEILDSLMRHLGVEYEIEETEHGSFISGRVGKVLVNGKEVGIIGEIHPQVLENWNIEVPVVAFEIFLRPLYQP</sequence>
<feature type="chain" id="PRO_0000127006" description="Phenylalanine--tRNA ligase beta subunit">
    <location>
        <begin position="1"/>
        <end position="556"/>
    </location>
</feature>
<feature type="domain" description="B5" evidence="1">
    <location>
        <begin position="278"/>
        <end position="353"/>
    </location>
</feature>
<feature type="binding site" evidence="1">
    <location>
        <position position="331"/>
    </location>
    <ligand>
        <name>Mg(2+)</name>
        <dbReference type="ChEBI" id="CHEBI:18420"/>
        <note>shared with alpha subunit</note>
    </ligand>
</feature>
<feature type="binding site" evidence="1">
    <location>
        <position position="337"/>
    </location>
    <ligand>
        <name>Mg(2+)</name>
        <dbReference type="ChEBI" id="CHEBI:18420"/>
        <note>shared with alpha subunit</note>
    </ligand>
</feature>
<feature type="binding site" evidence="1">
    <location>
        <position position="340"/>
    </location>
    <ligand>
        <name>Mg(2+)</name>
        <dbReference type="ChEBI" id="CHEBI:18420"/>
        <note>shared with alpha subunit</note>
    </ligand>
</feature>
<feature type="binding site" evidence="1">
    <location>
        <position position="341"/>
    </location>
    <ligand>
        <name>Mg(2+)</name>
        <dbReference type="ChEBI" id="CHEBI:18420"/>
        <note>shared with alpha subunit</note>
    </ligand>
</feature>
<name>SYFB_PYRAB</name>
<proteinExistence type="inferred from homology"/>
<evidence type="ECO:0000255" key="1">
    <source>
        <dbReference type="HAMAP-Rule" id="MF_00284"/>
    </source>
</evidence>
<evidence type="ECO:0000305" key="2"/>